<sequence length="195" mass="19971">MKKKVLAIALVTAFTGMGVAQAADVTAQAVATWSATAKKDTTSKLVVTPLGSLAFQYAEGIKGFNSQKGLFDVAIEGDATATAFKLTSRLITNTLTQLDTSGSTLSVGVDYNGAAVEKTADTVMIDTANGVLGGNLSALANGYNASGRTTAQDGFTFSIISGTTNGTTAVTDYSTLPEGIWSGDVSVQFDATWTS</sequence>
<dbReference type="EMBL" id="CP000964">
    <property type="protein sequence ID" value="ACI11765.1"/>
    <property type="molecule type" value="Genomic_DNA"/>
</dbReference>
<dbReference type="SMR" id="B5Y158"/>
<dbReference type="KEGG" id="kpe:KPK_4399"/>
<dbReference type="HOGENOM" id="CLU_120328_0_0_6"/>
<dbReference type="Proteomes" id="UP000001734">
    <property type="component" value="Chromosome"/>
</dbReference>
<dbReference type="GO" id="GO:0009289">
    <property type="term" value="C:pilus"/>
    <property type="evidence" value="ECO:0007669"/>
    <property type="project" value="UniProtKB-SubCell"/>
</dbReference>
<dbReference type="Gene3D" id="2.60.40.3290">
    <property type="entry name" value="Fimbrial protein EcpA"/>
    <property type="match status" value="1"/>
</dbReference>
<dbReference type="InterPro" id="IPR016514">
    <property type="entry name" value="EcpA"/>
</dbReference>
<dbReference type="InterPro" id="IPR038478">
    <property type="entry name" value="Fimbrillin_EcpA_sf"/>
</dbReference>
<dbReference type="Pfam" id="PF16449">
    <property type="entry name" value="MatB"/>
    <property type="match status" value="1"/>
</dbReference>
<dbReference type="PIRSF" id="PIRSF007320">
    <property type="entry name" value="Fimbrillin_MatB"/>
    <property type="match status" value="1"/>
</dbReference>
<name>ECPA_KLEP3</name>
<feature type="signal peptide" evidence="2">
    <location>
        <begin position="1"/>
        <end position="22"/>
    </location>
</feature>
<feature type="chain" id="PRO_0000367932" description="Common pilus major fimbrillin subunit EcpA">
    <location>
        <begin position="23"/>
        <end position="195"/>
    </location>
</feature>
<comment type="function">
    <text evidence="1">Part of the ecpRABCDE operon, which encodes the E.coli common pilus (ECP). ECP plays a dual role in early-stage biofilm development and host cell recognition. Major subunit of the fimbria (By similarity).</text>
</comment>
<comment type="subunit">
    <text evidence="1">Self-associates. Forms filaments. Interacts with EcpD (By similarity).</text>
</comment>
<comment type="subcellular location">
    <subcellularLocation>
        <location evidence="1">Fimbrium</location>
    </subcellularLocation>
</comment>
<comment type="induction">
    <text evidence="1">Positively regulated by EcpR.</text>
</comment>
<comment type="similarity">
    <text evidence="3">Belongs to the EcpA/MatB fimbrillin family.</text>
</comment>
<proteinExistence type="inferred from homology"/>
<gene>
    <name type="primary">ecpA</name>
    <name type="synonym">matB</name>
    <name type="ordered locus">KPK_4399</name>
</gene>
<protein>
    <recommendedName>
        <fullName>Common pilus major fimbrillin subunit EcpA</fullName>
    </recommendedName>
    <alternativeName>
        <fullName>MatB fimbrillin</fullName>
    </alternativeName>
</protein>
<keyword id="KW-0281">Fimbrium</keyword>
<keyword id="KW-0732">Signal</keyword>
<evidence type="ECO:0000250" key="1"/>
<evidence type="ECO:0000255" key="2"/>
<evidence type="ECO:0000305" key="3"/>
<accession>B5Y158</accession>
<reference key="1">
    <citation type="journal article" date="2008" name="PLoS Genet.">
        <title>Complete genome sequence of the N2-fixing broad host range endophyte Klebsiella pneumoniae 342 and virulence predictions verified in mice.</title>
        <authorList>
            <person name="Fouts D.E."/>
            <person name="Tyler H.L."/>
            <person name="DeBoy R.T."/>
            <person name="Daugherty S."/>
            <person name="Ren Q."/>
            <person name="Badger J.H."/>
            <person name="Durkin A.S."/>
            <person name="Huot H."/>
            <person name="Shrivastava S."/>
            <person name="Kothari S."/>
            <person name="Dodson R.J."/>
            <person name="Mohamoud Y."/>
            <person name="Khouri H."/>
            <person name="Roesch L.F.W."/>
            <person name="Krogfelt K.A."/>
            <person name="Struve C."/>
            <person name="Triplett E.W."/>
            <person name="Methe B.A."/>
        </authorList>
    </citation>
    <scope>NUCLEOTIDE SEQUENCE [LARGE SCALE GENOMIC DNA]</scope>
    <source>
        <strain>342</strain>
    </source>
</reference>
<organism>
    <name type="scientific">Klebsiella pneumoniae (strain 342)</name>
    <dbReference type="NCBI Taxonomy" id="507522"/>
    <lineage>
        <taxon>Bacteria</taxon>
        <taxon>Pseudomonadati</taxon>
        <taxon>Pseudomonadota</taxon>
        <taxon>Gammaproteobacteria</taxon>
        <taxon>Enterobacterales</taxon>
        <taxon>Enterobacteriaceae</taxon>
        <taxon>Klebsiella/Raoultella group</taxon>
        <taxon>Klebsiella</taxon>
        <taxon>Klebsiella pneumoniae complex</taxon>
    </lineage>
</organism>